<reference key="1">
    <citation type="journal article" date="2005" name="BMC Genomics">
        <title>Characterization of 954 bovine full-CDS cDNA sequences.</title>
        <authorList>
            <person name="Harhay G.P."/>
            <person name="Sonstegard T.S."/>
            <person name="Keele J.W."/>
            <person name="Heaton M.P."/>
            <person name="Clawson M.L."/>
            <person name="Snelling W.M."/>
            <person name="Wiedmann R.T."/>
            <person name="Van Tassell C.P."/>
            <person name="Smith T.P.L."/>
        </authorList>
    </citation>
    <scope>NUCLEOTIDE SEQUENCE [LARGE SCALE MRNA]</scope>
</reference>
<comment type="function">
    <text evidence="2">Catalyzes the second of the four reactions of the long-chain fatty acids elongation cycle. This endoplasmic reticulum-bound enzymatic process, allows the addition of two carbons to the chain of long- and very long-chain fatty acids/VLCFAs per cycle. This enzyme has a 3-ketoacyl-CoA reductase activity, reducing 3-ketoacyl-CoA to 3-hydroxyacyl-CoA, within each cycle of fatty acid elongation. Thereby, it may participate in the production of VLCFAs of different chain lengths that are involved in multiple biological processes as precursors of membrane lipids and lipid mediators. May also catalyze the transformation of estrone (E1) into estradiol (E2) and play a role in estrogen formation.</text>
</comment>
<comment type="catalytic activity">
    <reaction evidence="2">
        <text>a very-long-chain (3R)-3-hydroxyacyl-CoA + NADP(+) = a very-long-chain 3-oxoacyl-CoA + NADPH + H(+)</text>
        <dbReference type="Rhea" id="RHEA:48680"/>
        <dbReference type="ChEBI" id="CHEBI:15378"/>
        <dbReference type="ChEBI" id="CHEBI:57783"/>
        <dbReference type="ChEBI" id="CHEBI:58349"/>
        <dbReference type="ChEBI" id="CHEBI:85440"/>
        <dbReference type="ChEBI" id="CHEBI:90725"/>
        <dbReference type="EC" id="1.1.1.330"/>
    </reaction>
</comment>
<comment type="catalytic activity">
    <reaction evidence="2">
        <text>17beta-estradiol + NAD(+) = estrone + NADH + H(+)</text>
        <dbReference type="Rhea" id="RHEA:24612"/>
        <dbReference type="ChEBI" id="CHEBI:15378"/>
        <dbReference type="ChEBI" id="CHEBI:16469"/>
        <dbReference type="ChEBI" id="CHEBI:17263"/>
        <dbReference type="ChEBI" id="CHEBI:57540"/>
        <dbReference type="ChEBI" id="CHEBI:57945"/>
        <dbReference type="EC" id="1.1.1.62"/>
    </reaction>
</comment>
<comment type="catalytic activity">
    <reaction evidence="2">
        <text>17beta-estradiol + NADP(+) = estrone + NADPH + H(+)</text>
        <dbReference type="Rhea" id="RHEA:24616"/>
        <dbReference type="ChEBI" id="CHEBI:15378"/>
        <dbReference type="ChEBI" id="CHEBI:16469"/>
        <dbReference type="ChEBI" id="CHEBI:17263"/>
        <dbReference type="ChEBI" id="CHEBI:57783"/>
        <dbReference type="ChEBI" id="CHEBI:58349"/>
        <dbReference type="EC" id="1.1.1.62"/>
    </reaction>
</comment>
<comment type="catalytic activity">
    <reaction evidence="2">
        <text>3-oxooctadecanoyl-CoA + NADPH + H(+) = (3R)-hydroxyoctadecanoyl-CoA + NADP(+)</text>
        <dbReference type="Rhea" id="RHEA:39151"/>
        <dbReference type="ChEBI" id="CHEBI:15378"/>
        <dbReference type="ChEBI" id="CHEBI:57783"/>
        <dbReference type="ChEBI" id="CHEBI:58349"/>
        <dbReference type="ChEBI" id="CHEBI:71407"/>
        <dbReference type="ChEBI" id="CHEBI:76374"/>
    </reaction>
</comment>
<comment type="catalytic activity">
    <reaction evidence="2">
        <text>(7Z,10Z,13Z,16Z)-3-oxodocosatetraenoyl-CoA + NADPH + H(+) = (3R)-hydroxy-(7Z,10Z,13Z,16Z)-docosatetraenoyl-CoA + NADP(+)</text>
        <dbReference type="Rhea" id="RHEA:39323"/>
        <dbReference type="ChEBI" id="CHEBI:15378"/>
        <dbReference type="ChEBI" id="CHEBI:57783"/>
        <dbReference type="ChEBI" id="CHEBI:58349"/>
        <dbReference type="ChEBI" id="CHEBI:73852"/>
        <dbReference type="ChEBI" id="CHEBI:76415"/>
    </reaction>
</comment>
<comment type="catalytic activity">
    <reaction evidence="2">
        <text>3-oxo-(7Z,10Z,13Z,16Z,19Z)-docosapentaenoyl-CoA + NADPH + H(+) = (3R)-hydroxy-(7Z,10Z,13Z,16Z,19Z)-docosapentaenoyl-CoA + NADP(+)</text>
        <dbReference type="Rhea" id="RHEA:39459"/>
        <dbReference type="ChEBI" id="CHEBI:15378"/>
        <dbReference type="ChEBI" id="CHEBI:57783"/>
        <dbReference type="ChEBI" id="CHEBI:58349"/>
        <dbReference type="ChEBI" id="CHEBI:73863"/>
        <dbReference type="ChEBI" id="CHEBI:76460"/>
    </reaction>
</comment>
<comment type="catalytic activity">
    <reaction evidence="2">
        <text>(8Z,11Z,14Z)-3-oxoeicosatrienoyl-CoA + NADPH + H(+) = (3R)-hydroxy-(8Z,11Z,14Z)-eicosatrienoyl-CoA + NADP(+)</text>
        <dbReference type="Rhea" id="RHEA:39311"/>
        <dbReference type="ChEBI" id="CHEBI:15378"/>
        <dbReference type="ChEBI" id="CHEBI:57783"/>
        <dbReference type="ChEBI" id="CHEBI:58349"/>
        <dbReference type="ChEBI" id="CHEBI:71481"/>
        <dbReference type="ChEBI" id="CHEBI:76411"/>
    </reaction>
</comment>
<comment type="pathway">
    <text evidence="2">Lipid metabolism; fatty acid biosynthesis.</text>
</comment>
<comment type="pathway">
    <text evidence="2">Steroid biosynthesis; estrogen biosynthesis.</text>
</comment>
<comment type="subcellular location">
    <subcellularLocation>
        <location evidence="2">Endoplasmic reticulum membrane</location>
        <topology evidence="2">Multi-pass membrane protein</topology>
    </subcellularLocation>
</comment>
<comment type="domain">
    <text evidence="1">The di-lysine motif confers endoplasmic reticulum localization for type I membrane proteins.</text>
</comment>
<comment type="similarity">
    <text evidence="5">Belongs to the short-chain dehydrogenases/reductases (SDR) family. 17-beta-HSD 3 subfamily.</text>
</comment>
<name>DHB12_BOVIN</name>
<feature type="chain" id="PRO_0000248367" description="Very-long-chain 3-oxoacyl-CoA reductase">
    <location>
        <begin position="1"/>
        <end position="312"/>
    </location>
</feature>
<feature type="transmembrane region" description="Helical" evidence="3">
    <location>
        <begin position="4"/>
        <end position="24"/>
    </location>
</feature>
<feature type="transmembrane region" description="Helical" evidence="3">
    <location>
        <begin position="182"/>
        <end position="202"/>
    </location>
</feature>
<feature type="transmembrane region" description="Helical" evidence="3">
    <location>
        <begin position="271"/>
        <end position="291"/>
    </location>
</feature>
<feature type="short sequence motif" description="Di-lysine motif" evidence="1">
    <location>
        <begin position="308"/>
        <end position="312"/>
    </location>
</feature>
<feature type="active site" description="Proton acceptor" evidence="4">
    <location>
        <position position="202"/>
    </location>
</feature>
<feature type="binding site" evidence="1">
    <location>
        <begin position="50"/>
        <end position="79"/>
    </location>
    <ligand>
        <name>NADP(+)</name>
        <dbReference type="ChEBI" id="CHEBI:58349"/>
    </ligand>
</feature>
<feature type="binding site" evidence="1">
    <location>
        <position position="189"/>
    </location>
    <ligand>
        <name>substrate</name>
    </ligand>
</feature>
<gene>
    <name type="primary">HSD17B12</name>
</gene>
<organism>
    <name type="scientific">Bos taurus</name>
    <name type="common">Bovine</name>
    <dbReference type="NCBI Taxonomy" id="9913"/>
    <lineage>
        <taxon>Eukaryota</taxon>
        <taxon>Metazoa</taxon>
        <taxon>Chordata</taxon>
        <taxon>Craniata</taxon>
        <taxon>Vertebrata</taxon>
        <taxon>Euteleostomi</taxon>
        <taxon>Mammalia</taxon>
        <taxon>Eutheria</taxon>
        <taxon>Laurasiatheria</taxon>
        <taxon>Artiodactyla</taxon>
        <taxon>Ruminantia</taxon>
        <taxon>Pecora</taxon>
        <taxon>Bovidae</taxon>
        <taxon>Bovinae</taxon>
        <taxon>Bos</taxon>
    </lineage>
</organism>
<keyword id="KW-0256">Endoplasmic reticulum</keyword>
<keyword id="KW-0444">Lipid biosynthesis</keyword>
<keyword id="KW-0443">Lipid metabolism</keyword>
<keyword id="KW-0472">Membrane</keyword>
<keyword id="KW-0521">NADP</keyword>
<keyword id="KW-0560">Oxidoreductase</keyword>
<keyword id="KW-1185">Reference proteome</keyword>
<keyword id="KW-0752">Steroid biosynthesis</keyword>
<keyword id="KW-0812">Transmembrane</keyword>
<keyword id="KW-1133">Transmembrane helix</keyword>
<protein>
    <recommendedName>
        <fullName evidence="5">Very-long-chain 3-oxoacyl-CoA reductase</fullName>
        <ecNumber evidence="2">1.1.1.330</ecNumber>
    </recommendedName>
    <alternativeName>
        <fullName evidence="2">17-beta-hydroxysteroid dehydrogenase 12</fullName>
        <shortName evidence="2">17-beta-HSD 12</shortName>
    </alternativeName>
    <alternativeName>
        <fullName evidence="2">3-ketoacyl-CoA reductase</fullName>
        <shortName evidence="2">KAR</shortName>
    </alternativeName>
    <alternativeName>
        <fullName evidence="2">Estradiol 17-beta-dehydrogenase 12</fullName>
        <ecNumber evidence="2">1.1.1.62</ecNumber>
    </alternativeName>
</protein>
<dbReference type="EC" id="1.1.1.330" evidence="2"/>
<dbReference type="EC" id="1.1.1.62" evidence="2"/>
<dbReference type="EMBL" id="BT020943">
    <property type="protein sequence ID" value="AAX08960.1"/>
    <property type="molecule type" value="mRNA"/>
</dbReference>
<dbReference type="SMR" id="Q5E9H7"/>
<dbReference type="FunCoup" id="Q5E9H7">
    <property type="interactions" value="1450"/>
</dbReference>
<dbReference type="STRING" id="9913.ENSBTAP00000000096"/>
<dbReference type="InParanoid" id="Q5E9H7"/>
<dbReference type="UniPathway" id="UPA00094"/>
<dbReference type="UniPathway" id="UPA00769"/>
<dbReference type="Proteomes" id="UP000009136">
    <property type="component" value="Unplaced"/>
</dbReference>
<dbReference type="GO" id="GO:0005783">
    <property type="term" value="C:endoplasmic reticulum"/>
    <property type="evidence" value="ECO:0000318"/>
    <property type="project" value="GO_Central"/>
</dbReference>
<dbReference type="GO" id="GO:0005789">
    <property type="term" value="C:endoplasmic reticulum membrane"/>
    <property type="evidence" value="ECO:0007669"/>
    <property type="project" value="UniProtKB-SubCell"/>
</dbReference>
<dbReference type="GO" id="GO:0004303">
    <property type="term" value="F:estradiol 17-beta-dehydrogenase [NAD(P)+] activity"/>
    <property type="evidence" value="ECO:0007669"/>
    <property type="project" value="UniProtKB-EC"/>
</dbReference>
<dbReference type="GO" id="GO:0016491">
    <property type="term" value="F:oxidoreductase activity"/>
    <property type="evidence" value="ECO:0000318"/>
    <property type="project" value="GO_Central"/>
</dbReference>
<dbReference type="GO" id="GO:0141040">
    <property type="term" value="F:very-long-chain 3-oxoacyl-CoA reductase activity"/>
    <property type="evidence" value="ECO:0007669"/>
    <property type="project" value="UniProtKB-EC"/>
</dbReference>
<dbReference type="GO" id="GO:0006703">
    <property type="term" value="P:estrogen biosynthetic process"/>
    <property type="evidence" value="ECO:0007669"/>
    <property type="project" value="UniProtKB-UniPathway"/>
</dbReference>
<dbReference type="GO" id="GO:0006633">
    <property type="term" value="P:fatty acid biosynthetic process"/>
    <property type="evidence" value="ECO:0007669"/>
    <property type="project" value="UniProtKB-UniPathway"/>
</dbReference>
<dbReference type="CDD" id="cd05356">
    <property type="entry name" value="17beta-HSD1_like_SDR_c"/>
    <property type="match status" value="1"/>
</dbReference>
<dbReference type="FunFam" id="3.40.50.720:FF:000137">
    <property type="entry name" value="Hydroxysteroid (17-beta) dehydrogenase 3"/>
    <property type="match status" value="1"/>
</dbReference>
<dbReference type="Gene3D" id="3.40.50.720">
    <property type="entry name" value="NAD(P)-binding Rossmann-like Domain"/>
    <property type="match status" value="1"/>
</dbReference>
<dbReference type="InterPro" id="IPR036291">
    <property type="entry name" value="NAD(P)-bd_dom_sf"/>
</dbReference>
<dbReference type="InterPro" id="IPR020904">
    <property type="entry name" value="Sc_DH/Rdtase_CS"/>
</dbReference>
<dbReference type="InterPro" id="IPR002347">
    <property type="entry name" value="SDR_fam"/>
</dbReference>
<dbReference type="InterPro" id="IPR051019">
    <property type="entry name" value="VLCFA-Steroid_DH"/>
</dbReference>
<dbReference type="PANTHER" id="PTHR43899">
    <property type="entry name" value="RH59310P"/>
    <property type="match status" value="1"/>
</dbReference>
<dbReference type="PANTHER" id="PTHR43899:SF14">
    <property type="entry name" value="VERY-LONG-CHAIN 3-OXOACYL-COA REDUCTASE"/>
    <property type="match status" value="1"/>
</dbReference>
<dbReference type="Pfam" id="PF00106">
    <property type="entry name" value="adh_short"/>
    <property type="match status" value="1"/>
</dbReference>
<dbReference type="PIRSF" id="PIRSF000126">
    <property type="entry name" value="11-beta-HSD1"/>
    <property type="match status" value="1"/>
</dbReference>
<dbReference type="PRINTS" id="PR00081">
    <property type="entry name" value="GDHRDH"/>
</dbReference>
<dbReference type="PRINTS" id="PR00080">
    <property type="entry name" value="SDRFAMILY"/>
</dbReference>
<dbReference type="SUPFAM" id="SSF51735">
    <property type="entry name" value="NAD(P)-binding Rossmann-fold domains"/>
    <property type="match status" value="1"/>
</dbReference>
<dbReference type="PROSITE" id="PS00061">
    <property type="entry name" value="ADH_SHORT"/>
    <property type="match status" value="1"/>
</dbReference>
<evidence type="ECO:0000250" key="1"/>
<evidence type="ECO:0000250" key="2">
    <source>
        <dbReference type="UniProtKB" id="Q53GQ0"/>
    </source>
</evidence>
<evidence type="ECO:0000255" key="3"/>
<evidence type="ECO:0000255" key="4">
    <source>
        <dbReference type="PROSITE-ProRule" id="PRU10001"/>
    </source>
</evidence>
<evidence type="ECO:0000305" key="5"/>
<accession>Q5E9H7</accession>
<proteinExistence type="evidence at transcript level"/>
<sequence length="312" mass="34495">METALPAAGFLYWVGASTVAYLALRISCWFFTALRVWGLGHEAGVGPWLGEWAVVTGGTDGIGKSYAEELAKRGMKIVLISRSQDKLDQVSSEISEKFKVETKTIAVDFTSEDIYDKIKASLAGLNIGVLVNNVGMSYEYPEYFLDVPDLDNTIKKLITVNALSVCKMTRLVLPGMVERSKGAILNISSASGMYPVPLLTIYSATKAFVDFFSQCLHEEYKSKGVIVQSVLPYYVATKLAKIKRPTWDKPSPETFVKSAMKTIGVQSRTNGYPIHSLVASVSASLPSWLYFKIAMYSGNSIRVRYLKKMKMN</sequence>